<proteinExistence type="evidence at transcript level"/>
<keyword id="KW-0964">Secreted</keyword>
<keyword id="KW-0732">Signal</keyword>
<keyword id="KW-0843">Virulence</keyword>
<protein>
    <recommendedName>
        <fullName evidence="4">Secreted RxLR effector protein 114</fullName>
    </recommendedName>
</protein>
<organism>
    <name type="scientific">Plasmopara viticola</name>
    <name type="common">Downy mildew of grapevine</name>
    <name type="synonym">Botrytis viticola</name>
    <dbReference type="NCBI Taxonomy" id="143451"/>
    <lineage>
        <taxon>Eukaryota</taxon>
        <taxon>Sar</taxon>
        <taxon>Stramenopiles</taxon>
        <taxon>Oomycota</taxon>
        <taxon>Peronosporales</taxon>
        <taxon>Peronosporaceae</taxon>
        <taxon>Plasmopara</taxon>
    </lineage>
</organism>
<dbReference type="SMR" id="P0CV45"/>
<dbReference type="GO" id="GO:0005576">
    <property type="term" value="C:extracellular region"/>
    <property type="evidence" value="ECO:0007669"/>
    <property type="project" value="UniProtKB-SubCell"/>
</dbReference>
<dbReference type="GO" id="GO:0043657">
    <property type="term" value="C:host cell"/>
    <property type="evidence" value="ECO:0007669"/>
    <property type="project" value="UniProtKB-SubCell"/>
</dbReference>
<feature type="signal peptide" evidence="1">
    <location>
        <begin position="1"/>
        <end position="19"/>
    </location>
</feature>
<feature type="chain" id="PRO_0000447954" description="Secreted RxLR effector protein 114">
    <location>
        <begin position="20"/>
        <end position="556"/>
    </location>
</feature>
<feature type="region of interest" description="Disordered" evidence="2">
    <location>
        <begin position="43"/>
        <end position="76"/>
    </location>
</feature>
<feature type="region of interest" description="Disordered" evidence="2">
    <location>
        <begin position="108"/>
        <end position="138"/>
    </location>
</feature>
<feature type="region of interest" description="Disordered" evidence="2">
    <location>
        <begin position="389"/>
        <end position="408"/>
    </location>
</feature>
<feature type="short sequence motif" description="RxLR-dEER" evidence="6">
    <location>
        <begin position="46"/>
        <end position="66"/>
    </location>
</feature>
<feature type="compositionally biased region" description="Basic and acidic residues" evidence="2">
    <location>
        <begin position="47"/>
        <end position="67"/>
    </location>
</feature>
<gene>
    <name evidence="4" type="primary">RXLR114</name>
</gene>
<evidence type="ECO:0000255" key="1"/>
<evidence type="ECO:0000256" key="2">
    <source>
        <dbReference type="SAM" id="MobiDB-lite"/>
    </source>
</evidence>
<evidence type="ECO:0000269" key="3">
    <source>
    </source>
</evidence>
<evidence type="ECO:0000303" key="4">
    <source>
    </source>
</evidence>
<evidence type="ECO:0000305" key="5"/>
<evidence type="ECO:0000305" key="6">
    <source>
    </source>
</evidence>
<comment type="function">
    <text evidence="3">Secreted effector that partially suppresses the host cell death induced by cell death-inducing proteins.</text>
</comment>
<comment type="subcellular location">
    <subcellularLocation>
        <location evidence="3">Secreted</location>
    </subcellularLocation>
    <subcellularLocation>
        <location evidence="6">Host cell</location>
    </subcellularLocation>
</comment>
<comment type="domain">
    <text evidence="6">The RxLR-dEER motif acts to carry the protein into the host cell cytoplasm through binding to cell surface phosphatidylinositol-3-phosphate.</text>
</comment>
<comment type="similarity">
    <text evidence="5">Belongs to the RxLR effector family.</text>
</comment>
<reference key="1">
    <citation type="journal article" date="2018" name="Front. Plant Sci.">
        <title>In planta functional analysis and subcellular localization of the oomycete pathogen Plasmopara viticola candidate RXLR effector repertoire.</title>
        <authorList>
            <person name="Liu Y."/>
            <person name="Lan X."/>
            <person name="Song S."/>
            <person name="Yin L."/>
            <person name="Dry I.B."/>
            <person name="Qu J."/>
            <person name="Xiang J."/>
            <person name="Lu J."/>
        </authorList>
    </citation>
    <scope>NUCLEOTIDE SEQUENCE [MRNA]</scope>
    <scope>DOMAIN</scope>
    <scope>FUNCTION</scope>
    <scope>SUBCELLULAR LOCATION</scope>
</reference>
<accession>P0CV45</accession>
<sequence>MCGAHFVAIALLVAAGCQTAAEFDQDDIQQTSKDDSMASIDLLQSRNLRESRDSKDDLLSAGDEERTPPFPSGVLKEPKVADSTMAAANVMRTEGEASAIKAASKNLNQLKSNKPQRIAPASRSVAGQVLHSSPDSDKSLVSVENEQLLVLAKRRRTKHPTAMMTNAVRSAEQHDYRLAPTESSTLPAQASDGQLSKQLITQKVLQLDKKKHVDESLWREELMTVDEVLHLLETFDKPAHPTAVNVHEANAIGIATKKLNYLRRNKRKRIAPTSNNVVGQVPHAQPDPDKSPVLVAKDIPSVLAKRLRTDHPTAIMENAARFVTQHNYRLAPTGPSTIIAATPNSQLKYHLPGQKALHLDKNEHAGDLKSLRNEESHTIEHILHLRERNDKSAHTTAENHQSVPEDWNTVSAKGPKLLSKDSINEKVKKVHAAFVEAFNLPFHQYPEETAMMLKLVQRKTKSSPNNGETYDAFMYMAELQQHSSHLRKLLGPDLKMLLGTDKTVLPIKLENLQEAYNVKLVIMYDLFFEFCHDRKDLVEGLPRKPKPNQWILKLST</sequence>
<name>RL114_PLAVT</name>